<comment type="function">
    <text evidence="1">Catalyzes the reversible formation of acyl-phosphate (acyl-PO(4)) from acyl-[acyl-carrier-protein] (acyl-ACP). This enzyme utilizes acyl-ACP as fatty acyl donor, but not acyl-CoA.</text>
</comment>
<comment type="catalytic activity">
    <reaction evidence="1">
        <text>a fatty acyl-[ACP] + phosphate = an acyl phosphate + holo-[ACP]</text>
        <dbReference type="Rhea" id="RHEA:42292"/>
        <dbReference type="Rhea" id="RHEA-COMP:9685"/>
        <dbReference type="Rhea" id="RHEA-COMP:14125"/>
        <dbReference type="ChEBI" id="CHEBI:43474"/>
        <dbReference type="ChEBI" id="CHEBI:59918"/>
        <dbReference type="ChEBI" id="CHEBI:64479"/>
        <dbReference type="ChEBI" id="CHEBI:138651"/>
        <dbReference type="EC" id="2.3.1.274"/>
    </reaction>
</comment>
<comment type="pathway">
    <text evidence="1">Lipid metabolism; phospholipid metabolism.</text>
</comment>
<comment type="subunit">
    <text evidence="1">Homodimer. Probably interacts with PlsY.</text>
</comment>
<comment type="subcellular location">
    <subcellularLocation>
        <location evidence="1">Cytoplasm</location>
    </subcellularLocation>
    <text evidence="1">Associated with the membrane possibly through PlsY.</text>
</comment>
<comment type="similarity">
    <text evidence="1">Belongs to the PlsX family.</text>
</comment>
<organism>
    <name type="scientific">Shewanella loihica (strain ATCC BAA-1088 / PV-4)</name>
    <dbReference type="NCBI Taxonomy" id="323850"/>
    <lineage>
        <taxon>Bacteria</taxon>
        <taxon>Pseudomonadati</taxon>
        <taxon>Pseudomonadota</taxon>
        <taxon>Gammaproteobacteria</taxon>
        <taxon>Alteromonadales</taxon>
        <taxon>Shewanellaceae</taxon>
        <taxon>Shewanella</taxon>
    </lineage>
</organism>
<sequence>MTNLTLALDAMGGDFGPRITVPATLQALRLYPFLHVIMVGDRSQIEPLLSHLESDLLSRIELVHTTEVVKMCDRPVHALRNCKQSSMRLAIELVRDKKAQACLSAGNTGALMAISKVLLKTLPGIDRPALVSCLPAVNHKPVYLLDLGANVSCCSETLFQFAVMGSVLCEAVDKNPAPKVALLNVGIEEIKGNDQVQQAGQLLQQSPQLNYAGFIEGDDIYSGNVDVIVCDGFVGNITLKTSEGIARLLVHQLKKGLTQGFFVRLLAKLIAPRINSVLNQMNPDHYNGASLIGLRGIVVKSHGSADESAYLQAISLAVTEAQRRLPKMIEERLESILLDINN</sequence>
<feature type="chain" id="PRO_1000001827" description="Phosphate acyltransferase">
    <location>
        <begin position="1"/>
        <end position="342"/>
    </location>
</feature>
<keyword id="KW-0963">Cytoplasm</keyword>
<keyword id="KW-0444">Lipid biosynthesis</keyword>
<keyword id="KW-0443">Lipid metabolism</keyword>
<keyword id="KW-0594">Phospholipid biosynthesis</keyword>
<keyword id="KW-1208">Phospholipid metabolism</keyword>
<keyword id="KW-1185">Reference proteome</keyword>
<keyword id="KW-0808">Transferase</keyword>
<protein>
    <recommendedName>
        <fullName evidence="1">Phosphate acyltransferase</fullName>
        <ecNumber evidence="1">2.3.1.274</ecNumber>
    </recommendedName>
    <alternativeName>
        <fullName evidence="1">Acyl-ACP phosphotransacylase</fullName>
    </alternativeName>
    <alternativeName>
        <fullName evidence="1">Acyl-[acyl-carrier-protein]--phosphate acyltransferase</fullName>
    </alternativeName>
    <alternativeName>
        <fullName evidence="1">Phosphate-acyl-ACP acyltransferase</fullName>
    </alternativeName>
</protein>
<proteinExistence type="inferred from homology"/>
<accession>A3QDB9</accession>
<gene>
    <name evidence="1" type="primary">plsX</name>
    <name type="ordered locus">Shew_1600</name>
</gene>
<dbReference type="EC" id="2.3.1.274" evidence="1"/>
<dbReference type="EMBL" id="CP000606">
    <property type="protein sequence ID" value="ABO23467.1"/>
    <property type="molecule type" value="Genomic_DNA"/>
</dbReference>
<dbReference type="RefSeq" id="WP_011865399.1">
    <property type="nucleotide sequence ID" value="NC_009092.1"/>
</dbReference>
<dbReference type="SMR" id="A3QDB9"/>
<dbReference type="STRING" id="323850.Shew_1600"/>
<dbReference type="KEGG" id="slo:Shew_1600"/>
<dbReference type="eggNOG" id="COG0416">
    <property type="taxonomic scope" value="Bacteria"/>
</dbReference>
<dbReference type="HOGENOM" id="CLU_039379_1_0_6"/>
<dbReference type="OrthoDB" id="9806408at2"/>
<dbReference type="UniPathway" id="UPA00085"/>
<dbReference type="Proteomes" id="UP000001558">
    <property type="component" value="Chromosome"/>
</dbReference>
<dbReference type="GO" id="GO:0005737">
    <property type="term" value="C:cytoplasm"/>
    <property type="evidence" value="ECO:0007669"/>
    <property type="project" value="UniProtKB-SubCell"/>
</dbReference>
<dbReference type="GO" id="GO:0043811">
    <property type="term" value="F:phosphate:acyl-[acyl carrier protein] acyltransferase activity"/>
    <property type="evidence" value="ECO:0007669"/>
    <property type="project" value="UniProtKB-UniRule"/>
</dbReference>
<dbReference type="GO" id="GO:0006633">
    <property type="term" value="P:fatty acid biosynthetic process"/>
    <property type="evidence" value="ECO:0007669"/>
    <property type="project" value="UniProtKB-UniRule"/>
</dbReference>
<dbReference type="GO" id="GO:0008654">
    <property type="term" value="P:phospholipid biosynthetic process"/>
    <property type="evidence" value="ECO:0007669"/>
    <property type="project" value="UniProtKB-KW"/>
</dbReference>
<dbReference type="Gene3D" id="3.40.718.10">
    <property type="entry name" value="Isopropylmalate Dehydrogenase"/>
    <property type="match status" value="1"/>
</dbReference>
<dbReference type="HAMAP" id="MF_00019">
    <property type="entry name" value="PlsX"/>
    <property type="match status" value="1"/>
</dbReference>
<dbReference type="InterPro" id="IPR003664">
    <property type="entry name" value="FA_synthesis"/>
</dbReference>
<dbReference type="InterPro" id="IPR012281">
    <property type="entry name" value="Phospholipid_synth_PlsX-like"/>
</dbReference>
<dbReference type="NCBIfam" id="TIGR00182">
    <property type="entry name" value="plsX"/>
    <property type="match status" value="1"/>
</dbReference>
<dbReference type="PANTHER" id="PTHR30100">
    <property type="entry name" value="FATTY ACID/PHOSPHOLIPID SYNTHESIS PROTEIN PLSX"/>
    <property type="match status" value="1"/>
</dbReference>
<dbReference type="PANTHER" id="PTHR30100:SF1">
    <property type="entry name" value="PHOSPHATE ACYLTRANSFERASE"/>
    <property type="match status" value="1"/>
</dbReference>
<dbReference type="Pfam" id="PF02504">
    <property type="entry name" value="FA_synthesis"/>
    <property type="match status" value="1"/>
</dbReference>
<dbReference type="PIRSF" id="PIRSF002465">
    <property type="entry name" value="Phsphlp_syn_PlsX"/>
    <property type="match status" value="1"/>
</dbReference>
<dbReference type="SUPFAM" id="SSF53659">
    <property type="entry name" value="Isocitrate/Isopropylmalate dehydrogenase-like"/>
    <property type="match status" value="1"/>
</dbReference>
<reference key="1">
    <citation type="submission" date="2007-03" db="EMBL/GenBank/DDBJ databases">
        <title>Complete sequence of Shewanella loihica PV-4.</title>
        <authorList>
            <consortium name="US DOE Joint Genome Institute"/>
            <person name="Copeland A."/>
            <person name="Lucas S."/>
            <person name="Lapidus A."/>
            <person name="Barry K."/>
            <person name="Detter J.C."/>
            <person name="Glavina del Rio T."/>
            <person name="Hammon N."/>
            <person name="Israni S."/>
            <person name="Dalin E."/>
            <person name="Tice H."/>
            <person name="Pitluck S."/>
            <person name="Chain P."/>
            <person name="Malfatti S."/>
            <person name="Shin M."/>
            <person name="Vergez L."/>
            <person name="Schmutz J."/>
            <person name="Larimer F."/>
            <person name="Land M."/>
            <person name="Hauser L."/>
            <person name="Kyrpides N."/>
            <person name="Mikhailova N."/>
            <person name="Romine M.F."/>
            <person name="Serres G."/>
            <person name="Fredrickson J."/>
            <person name="Tiedje J."/>
            <person name="Richardson P."/>
        </authorList>
    </citation>
    <scope>NUCLEOTIDE SEQUENCE [LARGE SCALE GENOMIC DNA]</scope>
    <source>
        <strain>ATCC BAA-1088 / PV-4</strain>
    </source>
</reference>
<name>PLSX_SHELP</name>
<evidence type="ECO:0000255" key="1">
    <source>
        <dbReference type="HAMAP-Rule" id="MF_00019"/>
    </source>
</evidence>